<reference key="1">
    <citation type="journal article" date="2009" name="PLoS Genet.">
        <title>Organised genome dynamics in the Escherichia coli species results in highly diverse adaptive paths.</title>
        <authorList>
            <person name="Touchon M."/>
            <person name="Hoede C."/>
            <person name="Tenaillon O."/>
            <person name="Barbe V."/>
            <person name="Baeriswyl S."/>
            <person name="Bidet P."/>
            <person name="Bingen E."/>
            <person name="Bonacorsi S."/>
            <person name="Bouchier C."/>
            <person name="Bouvet O."/>
            <person name="Calteau A."/>
            <person name="Chiapello H."/>
            <person name="Clermont O."/>
            <person name="Cruveiller S."/>
            <person name="Danchin A."/>
            <person name="Diard M."/>
            <person name="Dossat C."/>
            <person name="Karoui M.E."/>
            <person name="Frapy E."/>
            <person name="Garry L."/>
            <person name="Ghigo J.M."/>
            <person name="Gilles A.M."/>
            <person name="Johnson J."/>
            <person name="Le Bouguenec C."/>
            <person name="Lescat M."/>
            <person name="Mangenot S."/>
            <person name="Martinez-Jehanne V."/>
            <person name="Matic I."/>
            <person name="Nassif X."/>
            <person name="Oztas S."/>
            <person name="Petit M.A."/>
            <person name="Pichon C."/>
            <person name="Rouy Z."/>
            <person name="Ruf C.S."/>
            <person name="Schneider D."/>
            <person name="Tourret J."/>
            <person name="Vacherie B."/>
            <person name="Vallenet D."/>
            <person name="Medigue C."/>
            <person name="Rocha E.P.C."/>
            <person name="Denamur E."/>
        </authorList>
    </citation>
    <scope>NUCLEOTIDE SEQUENCE [LARGE SCALE GENOMIC DNA]</scope>
    <source>
        <strain>S88 / ExPEC</strain>
    </source>
</reference>
<organism>
    <name type="scientific">Escherichia coli O45:K1 (strain S88 / ExPEC)</name>
    <dbReference type="NCBI Taxonomy" id="585035"/>
    <lineage>
        <taxon>Bacteria</taxon>
        <taxon>Pseudomonadati</taxon>
        <taxon>Pseudomonadota</taxon>
        <taxon>Gammaproteobacteria</taxon>
        <taxon>Enterobacterales</taxon>
        <taxon>Enterobacteriaceae</taxon>
        <taxon>Escherichia</taxon>
    </lineage>
</organism>
<protein>
    <recommendedName>
        <fullName evidence="1">Glucosamine-6-phosphate deaminase</fullName>
        <ecNumber evidence="1">3.5.99.6</ecNumber>
    </recommendedName>
    <alternativeName>
        <fullName evidence="1">GlcN6P deaminase</fullName>
        <shortName evidence="1">GNPDA</shortName>
    </alternativeName>
    <alternativeName>
        <fullName evidence="1">Glucosamine-6-phosphate isomerase</fullName>
    </alternativeName>
</protein>
<accession>B7MFT4</accession>
<evidence type="ECO:0000255" key="1">
    <source>
        <dbReference type="HAMAP-Rule" id="MF_01241"/>
    </source>
</evidence>
<name>NAGB_ECO45</name>
<keyword id="KW-0021">Allosteric enzyme</keyword>
<keyword id="KW-0119">Carbohydrate metabolism</keyword>
<keyword id="KW-1015">Disulfide bond</keyword>
<keyword id="KW-0378">Hydrolase</keyword>
<keyword id="KW-1185">Reference proteome</keyword>
<dbReference type="EC" id="3.5.99.6" evidence="1"/>
<dbReference type="EMBL" id="CU928161">
    <property type="protein sequence ID" value="CAR02043.1"/>
    <property type="molecule type" value="Genomic_DNA"/>
</dbReference>
<dbReference type="RefSeq" id="WP_001237072.1">
    <property type="nucleotide sequence ID" value="NC_011742.1"/>
</dbReference>
<dbReference type="SMR" id="B7MFT4"/>
<dbReference type="GeneID" id="93776807"/>
<dbReference type="KEGG" id="ecz:ECS88_0703"/>
<dbReference type="HOGENOM" id="CLU_049611_0_1_6"/>
<dbReference type="UniPathway" id="UPA00629">
    <property type="reaction ID" value="UER00684"/>
</dbReference>
<dbReference type="Proteomes" id="UP000000747">
    <property type="component" value="Chromosome"/>
</dbReference>
<dbReference type="GO" id="GO:0005829">
    <property type="term" value="C:cytosol"/>
    <property type="evidence" value="ECO:0007669"/>
    <property type="project" value="TreeGrafter"/>
</dbReference>
<dbReference type="GO" id="GO:0004342">
    <property type="term" value="F:glucosamine-6-phosphate deaminase activity"/>
    <property type="evidence" value="ECO:0007669"/>
    <property type="project" value="UniProtKB-UniRule"/>
</dbReference>
<dbReference type="GO" id="GO:0042802">
    <property type="term" value="F:identical protein binding"/>
    <property type="evidence" value="ECO:0007669"/>
    <property type="project" value="TreeGrafter"/>
</dbReference>
<dbReference type="GO" id="GO:0005975">
    <property type="term" value="P:carbohydrate metabolic process"/>
    <property type="evidence" value="ECO:0007669"/>
    <property type="project" value="InterPro"/>
</dbReference>
<dbReference type="GO" id="GO:0006043">
    <property type="term" value="P:glucosamine catabolic process"/>
    <property type="evidence" value="ECO:0007669"/>
    <property type="project" value="TreeGrafter"/>
</dbReference>
<dbReference type="GO" id="GO:0006046">
    <property type="term" value="P:N-acetylglucosamine catabolic process"/>
    <property type="evidence" value="ECO:0007669"/>
    <property type="project" value="TreeGrafter"/>
</dbReference>
<dbReference type="GO" id="GO:0019262">
    <property type="term" value="P:N-acetylneuraminate catabolic process"/>
    <property type="evidence" value="ECO:0007669"/>
    <property type="project" value="UniProtKB-UniRule"/>
</dbReference>
<dbReference type="CDD" id="cd01399">
    <property type="entry name" value="GlcN6P_deaminase"/>
    <property type="match status" value="1"/>
</dbReference>
<dbReference type="FunFam" id="3.40.50.1360:FF:000002">
    <property type="entry name" value="Glucosamine-6-phosphate deaminase"/>
    <property type="match status" value="1"/>
</dbReference>
<dbReference type="Gene3D" id="3.40.50.1360">
    <property type="match status" value="1"/>
</dbReference>
<dbReference type="HAMAP" id="MF_01241">
    <property type="entry name" value="GlcN6P_deamin"/>
    <property type="match status" value="1"/>
</dbReference>
<dbReference type="InterPro" id="IPR006148">
    <property type="entry name" value="Glc/Gal-6P_isomerase"/>
</dbReference>
<dbReference type="InterPro" id="IPR004547">
    <property type="entry name" value="Glucosamine6P_isomerase"/>
</dbReference>
<dbReference type="InterPro" id="IPR018321">
    <property type="entry name" value="Glucosamine6P_isomerase_CS"/>
</dbReference>
<dbReference type="InterPro" id="IPR037171">
    <property type="entry name" value="NagB/RpiA_transferase-like"/>
</dbReference>
<dbReference type="NCBIfam" id="TIGR00502">
    <property type="entry name" value="nagB"/>
    <property type="match status" value="1"/>
</dbReference>
<dbReference type="NCBIfam" id="NF001685">
    <property type="entry name" value="PRK00443.1-5"/>
    <property type="match status" value="1"/>
</dbReference>
<dbReference type="PANTHER" id="PTHR11280">
    <property type="entry name" value="GLUCOSAMINE-6-PHOSPHATE ISOMERASE"/>
    <property type="match status" value="1"/>
</dbReference>
<dbReference type="PANTHER" id="PTHR11280:SF5">
    <property type="entry name" value="GLUCOSAMINE-6-PHOSPHATE ISOMERASE"/>
    <property type="match status" value="1"/>
</dbReference>
<dbReference type="Pfam" id="PF01182">
    <property type="entry name" value="Glucosamine_iso"/>
    <property type="match status" value="1"/>
</dbReference>
<dbReference type="SUPFAM" id="SSF100950">
    <property type="entry name" value="NagB/RpiA/CoA transferase-like"/>
    <property type="match status" value="1"/>
</dbReference>
<dbReference type="PROSITE" id="PS01161">
    <property type="entry name" value="GLC_GALNAC_ISOMERASE"/>
    <property type="match status" value="1"/>
</dbReference>
<gene>
    <name evidence="1" type="primary">nagB</name>
    <name type="ordered locus">ECS88_0703</name>
</gene>
<comment type="function">
    <text evidence="1">Catalyzes the reversible isomerization-deamination of glucosamine 6-phosphate (GlcN6P) to form fructose 6-phosphate (Fru6P) and ammonium ion.</text>
</comment>
<comment type="catalytic activity">
    <reaction evidence="1">
        <text>alpha-D-glucosamine 6-phosphate + H2O = beta-D-fructose 6-phosphate + NH4(+)</text>
        <dbReference type="Rhea" id="RHEA:12172"/>
        <dbReference type="ChEBI" id="CHEBI:15377"/>
        <dbReference type="ChEBI" id="CHEBI:28938"/>
        <dbReference type="ChEBI" id="CHEBI:57634"/>
        <dbReference type="ChEBI" id="CHEBI:75989"/>
        <dbReference type="EC" id="3.5.99.6"/>
    </reaction>
</comment>
<comment type="activity regulation">
    <text evidence="1">Allosterically activated by N-acetylglucosamine 6-phosphate (GlcNAc6P).</text>
</comment>
<comment type="pathway">
    <text evidence="1">Amino-sugar metabolism; N-acetylneuraminate degradation; D-fructose 6-phosphate from N-acetylneuraminate: step 5/5.</text>
</comment>
<comment type="subunit">
    <text evidence="1">Homohexamer; trimer of disulfide-linked dimers.</text>
</comment>
<comment type="similarity">
    <text evidence="1">Belongs to the glucosamine/galactosamine-6-phosphate isomerase family. NagB subfamily.</text>
</comment>
<sequence>MRLIPLTTAEQVGKWAARHIVNRINAFKPTADRPFVLGLPTGGTPMTTYKALVEMHKAGQVSFKHVVTFNMDEYVGLPKEHPESYYSFMHRNFFDHVDIPAENINLLNGNAPDIDAECRQYEEKIRSYGKIHLFMGGVGNDGHIAFNEPASSLASRTRIKTLTHDTRVANSRFFDNDVNQVPKYALTVGVGTLLDAEEVMILVLGSQKALALQAAVEGCVNHMWTISCLQLHPKAIMVCDEPSTMELKVKTLRYFNELEAENIKGL</sequence>
<proteinExistence type="inferred from homology"/>
<feature type="chain" id="PRO_1000139768" description="Glucosamine-6-phosphate deaminase">
    <location>
        <begin position="1"/>
        <end position="266"/>
    </location>
</feature>
<feature type="active site" description="Proton acceptor; for enolization step" evidence="1">
    <location>
        <position position="72"/>
    </location>
</feature>
<feature type="active site" description="For ring-opening step" evidence="1">
    <location>
        <position position="141"/>
    </location>
</feature>
<feature type="active site" description="Proton acceptor; for ring-opening step" evidence="1">
    <location>
        <position position="143"/>
    </location>
</feature>
<feature type="active site" description="For ring-opening step" evidence="1">
    <location>
        <position position="148"/>
    </location>
</feature>
<feature type="site" description="Part of the allosteric site" evidence="1">
    <location>
        <position position="151"/>
    </location>
</feature>
<feature type="site" description="Part of the allosteric site" evidence="1">
    <location>
        <position position="158"/>
    </location>
</feature>
<feature type="site" description="Part of the allosteric site" evidence="1">
    <location>
        <position position="160"/>
    </location>
</feature>
<feature type="site" description="Part of the allosteric site" evidence="1">
    <location>
        <position position="161"/>
    </location>
</feature>
<feature type="site" description="Part of the allosteric site" evidence="1">
    <location>
        <position position="254"/>
    </location>
</feature>
<feature type="disulfide bond" description="Interchain" evidence="1">
    <location>
        <position position="219"/>
    </location>
</feature>